<proteinExistence type="predicted"/>
<keyword id="KW-1185">Reference proteome</keyword>
<organism>
    <name type="scientific">Saccharomyces cerevisiae (strain ATCC 204508 / S288c)</name>
    <name type="common">Baker's yeast</name>
    <dbReference type="NCBI Taxonomy" id="559292"/>
    <lineage>
        <taxon>Eukaryota</taxon>
        <taxon>Fungi</taxon>
        <taxon>Dikarya</taxon>
        <taxon>Ascomycota</taxon>
        <taxon>Saccharomycotina</taxon>
        <taxon>Saccharomycetes</taxon>
        <taxon>Saccharomycetales</taxon>
        <taxon>Saccharomycetaceae</taxon>
        <taxon>Saccharomyces</taxon>
    </lineage>
</organism>
<gene>
    <name type="ordered locus">YPR108W-A</name>
</gene>
<protein>
    <recommendedName>
        <fullName>Uncharacterized protein YPR108W-A</fullName>
    </recommendedName>
</protein>
<name>YPR08_YEAST</name>
<accession>Q3E7B3</accession>
<accession>D6W4A7</accession>
<sequence length="70" mass="7756">MKSLHDSLSVTDIKRSRLQISMQTLCPFLEDTLQCKSLLSLVVERCTCNAKVVSSILTGGKIFSLKLTLI</sequence>
<feature type="chain" id="PRO_0000242624" description="Uncharacterized protein YPR108W-A">
    <location>
        <begin position="1"/>
        <end position="70"/>
    </location>
</feature>
<dbReference type="EMBL" id="U32445">
    <property type="status" value="NOT_ANNOTATED_CDS"/>
    <property type="molecule type" value="Genomic_DNA"/>
</dbReference>
<dbReference type="EMBL" id="BK006949">
    <property type="protein sequence ID" value="DAA11523.1"/>
    <property type="molecule type" value="Genomic_DNA"/>
</dbReference>
<dbReference type="RefSeq" id="NP_878183.1">
    <property type="nucleotide sequence ID" value="NM_001184581.1"/>
</dbReference>
<dbReference type="BioGRID" id="37064">
    <property type="interactions" value="37"/>
</dbReference>
<dbReference type="FunCoup" id="Q3E7B3">
    <property type="interactions" value="12"/>
</dbReference>
<dbReference type="STRING" id="4932.YPR108W-A"/>
<dbReference type="PaxDb" id="4932-YPR108W-A"/>
<dbReference type="EnsemblFungi" id="YPR108W-A_mRNA">
    <property type="protein sequence ID" value="YPR108W-A"/>
    <property type="gene ID" value="YPR108W-A"/>
</dbReference>
<dbReference type="AGR" id="SGD:S000028590"/>
<dbReference type="SGD" id="S000028590">
    <property type="gene designation" value="YPR108W-A"/>
</dbReference>
<dbReference type="VEuPathDB" id="FungiDB:YPR108W-A"/>
<dbReference type="HOGENOM" id="CLU_2759241_0_0_1"/>
<dbReference type="InParanoid" id="Q3E7B3"/>
<dbReference type="BioCyc" id="YEAST:G3O-34365-MONOMER"/>
<dbReference type="BioGRID-ORCS" id="1466522">
    <property type="hits" value="2 hits in 10 CRISPR screens"/>
</dbReference>
<dbReference type="PRO" id="PR:Q3E7B3"/>
<dbReference type="Proteomes" id="UP000002311">
    <property type="component" value="Chromosome XVI"/>
</dbReference>
<dbReference type="RNAct" id="Q3E7B3">
    <property type="molecule type" value="protein"/>
</dbReference>
<reference key="1">
    <citation type="journal article" date="1997" name="Nature">
        <title>The nucleotide sequence of Saccharomyces cerevisiae chromosome XVI.</title>
        <authorList>
            <person name="Bussey H."/>
            <person name="Storms R.K."/>
            <person name="Ahmed A."/>
            <person name="Albermann K."/>
            <person name="Allen E."/>
            <person name="Ansorge W."/>
            <person name="Araujo R."/>
            <person name="Aparicio A."/>
            <person name="Barrell B.G."/>
            <person name="Badcock K."/>
            <person name="Benes V."/>
            <person name="Botstein D."/>
            <person name="Bowman S."/>
            <person name="Brueckner M."/>
            <person name="Carpenter J."/>
            <person name="Cherry J.M."/>
            <person name="Chung E."/>
            <person name="Churcher C.M."/>
            <person name="Coster F."/>
            <person name="Davis K."/>
            <person name="Davis R.W."/>
            <person name="Dietrich F.S."/>
            <person name="Delius H."/>
            <person name="DiPaolo T."/>
            <person name="Dubois E."/>
            <person name="Duesterhoeft A."/>
            <person name="Duncan M."/>
            <person name="Floeth M."/>
            <person name="Fortin N."/>
            <person name="Friesen J.D."/>
            <person name="Fritz C."/>
            <person name="Goffeau A."/>
            <person name="Hall J."/>
            <person name="Hebling U."/>
            <person name="Heumann K."/>
            <person name="Hilbert H."/>
            <person name="Hillier L.W."/>
            <person name="Hunicke-Smith S."/>
            <person name="Hyman R.W."/>
            <person name="Johnston M."/>
            <person name="Kalman S."/>
            <person name="Kleine K."/>
            <person name="Komp C."/>
            <person name="Kurdi O."/>
            <person name="Lashkari D."/>
            <person name="Lew H."/>
            <person name="Lin A."/>
            <person name="Lin D."/>
            <person name="Louis E.J."/>
            <person name="Marathe R."/>
            <person name="Messenguy F."/>
            <person name="Mewes H.-W."/>
            <person name="Mirtipati S."/>
            <person name="Moestl D."/>
            <person name="Mueller-Auer S."/>
            <person name="Namath A."/>
            <person name="Nentwich U."/>
            <person name="Oefner P."/>
            <person name="Pearson D."/>
            <person name="Petel F.X."/>
            <person name="Pohl T.M."/>
            <person name="Purnelle B."/>
            <person name="Rajandream M.A."/>
            <person name="Rechmann S."/>
            <person name="Rieger M."/>
            <person name="Riles L."/>
            <person name="Roberts D."/>
            <person name="Schaefer M."/>
            <person name="Scharfe M."/>
            <person name="Scherens B."/>
            <person name="Schramm S."/>
            <person name="Schroeder M."/>
            <person name="Sdicu A.-M."/>
            <person name="Tettelin H."/>
            <person name="Urrestarazu L.A."/>
            <person name="Ushinsky S."/>
            <person name="Vierendeels F."/>
            <person name="Vissers S."/>
            <person name="Voss H."/>
            <person name="Walsh S.V."/>
            <person name="Wambutt R."/>
            <person name="Wang Y."/>
            <person name="Wedler E."/>
            <person name="Wedler H."/>
            <person name="Winnett E."/>
            <person name="Zhong W.-W."/>
            <person name="Zollner A."/>
            <person name="Vo D.H."/>
            <person name="Hani J."/>
        </authorList>
    </citation>
    <scope>NUCLEOTIDE SEQUENCE [LARGE SCALE GENOMIC DNA]</scope>
    <source>
        <strain>ATCC 204508 / S288c</strain>
    </source>
</reference>
<reference key="2">
    <citation type="journal article" date="2014" name="G3 (Bethesda)">
        <title>The reference genome sequence of Saccharomyces cerevisiae: Then and now.</title>
        <authorList>
            <person name="Engel S.R."/>
            <person name="Dietrich F.S."/>
            <person name="Fisk D.G."/>
            <person name="Binkley G."/>
            <person name="Balakrishnan R."/>
            <person name="Costanzo M.C."/>
            <person name="Dwight S.S."/>
            <person name="Hitz B.C."/>
            <person name="Karra K."/>
            <person name="Nash R.S."/>
            <person name="Weng S."/>
            <person name="Wong E.D."/>
            <person name="Lloyd P."/>
            <person name="Skrzypek M.S."/>
            <person name="Miyasato S.R."/>
            <person name="Simison M."/>
            <person name="Cherry J.M."/>
        </authorList>
    </citation>
    <scope>GENOME REANNOTATION</scope>
    <source>
        <strain>ATCC 204508 / S288c</strain>
    </source>
</reference>
<reference key="3">
    <citation type="journal article" date="2003" name="Genome Res.">
        <title>Systematic discovery of new genes in the Saccharomyces cerevisiae genome.</title>
        <authorList>
            <person name="Kessler M.M."/>
            <person name="Zeng Q."/>
            <person name="Hogan S."/>
            <person name="Cook R."/>
            <person name="Morales A.J."/>
            <person name="Cottarel G."/>
        </authorList>
    </citation>
    <scope>GENOME REANNOTATION</scope>
</reference>